<reference key="1">
    <citation type="journal article" date="2003" name="Nucleic Acids Res.">
        <title>The complete genome sequence and analysis of Corynebacterium diphtheriae NCTC13129.</title>
        <authorList>
            <person name="Cerdeno-Tarraga A.-M."/>
            <person name="Efstratiou A."/>
            <person name="Dover L.G."/>
            <person name="Holden M.T.G."/>
            <person name="Pallen M.J."/>
            <person name="Bentley S.D."/>
            <person name="Besra G.S."/>
            <person name="Churcher C.M."/>
            <person name="James K.D."/>
            <person name="De Zoysa A."/>
            <person name="Chillingworth T."/>
            <person name="Cronin A."/>
            <person name="Dowd L."/>
            <person name="Feltwell T."/>
            <person name="Hamlin N."/>
            <person name="Holroyd S."/>
            <person name="Jagels K."/>
            <person name="Moule S."/>
            <person name="Quail M.A."/>
            <person name="Rabbinowitsch E."/>
            <person name="Rutherford K.M."/>
            <person name="Thomson N.R."/>
            <person name="Unwin L."/>
            <person name="Whitehead S."/>
            <person name="Barrell B.G."/>
            <person name="Parkhill J."/>
        </authorList>
    </citation>
    <scope>NUCLEOTIDE SEQUENCE [LARGE SCALE GENOMIC DNA]</scope>
    <source>
        <strain>ATCC 700971 / NCTC 13129 / Biotype gravis</strain>
    </source>
</reference>
<reference key="2">
    <citation type="journal article" date="2015" name="Nature">
        <title>In vivo genome editing using Staphylococcus aureus Cas9.</title>
        <authorList>
            <person name="Ran F.A."/>
            <person name="Cong L."/>
            <person name="Yan W.X."/>
            <person name="Scott D.A."/>
            <person name="Gootenberg J.S."/>
            <person name="Kriz A.J."/>
            <person name="Zetsche B."/>
            <person name="Shalem O."/>
            <person name="Wu X."/>
            <person name="Makarova K.S."/>
            <person name="Koonin E.V."/>
            <person name="Sharp P.A."/>
            <person name="Zhang F."/>
        </authorList>
    </citation>
    <scope>FUNCTION</scope>
    <scope>POSSIBLE BIOTECHNOLOGY</scope>
</reference>
<reference key="3">
    <citation type="journal article" date="2023" name="Nat. Commun.">
        <title>Assessing and advancing the safety of CRISPR-Cas tools: from DNA to RNA editing.</title>
        <authorList>
            <person name="Tao J."/>
            <person name="Bauer D.E."/>
            <person name="Chiarle R."/>
        </authorList>
    </citation>
    <scope>REVIEW ON SAFETY OF GENOME EDITING TOOLS</scope>
</reference>
<evidence type="ECO:0000250" key="1">
    <source>
        <dbReference type="UniProtKB" id="Q99ZW2"/>
    </source>
</evidence>
<evidence type="ECO:0000255" key="2">
    <source>
        <dbReference type="PROSITE-ProRule" id="PRU01085"/>
    </source>
</evidence>
<evidence type="ECO:0000269" key="3">
    <source>
    </source>
</evidence>
<evidence type="ECO:0000303" key="4">
    <source>
    </source>
</evidence>
<evidence type="ECO:0000305" key="5"/>
<evidence type="ECO:0000305" key="6">
    <source>
    </source>
</evidence>
<evidence type="ECO:0007829" key="7">
    <source>
        <dbReference type="PDB" id="6JOO"/>
    </source>
</evidence>
<proteinExistence type="evidence at protein level"/>
<gene>
    <name evidence="4" type="primary">cas9</name>
    <name type="ordered locus">DIP0036</name>
</gene>
<dbReference type="EC" id="3.1.-.-"/>
<dbReference type="EMBL" id="BX248354">
    <property type="protein sequence ID" value="CAE48549.1"/>
    <property type="molecule type" value="Genomic_DNA"/>
</dbReference>
<dbReference type="RefSeq" id="WP_010933968.1">
    <property type="nucleotide sequence ID" value="NC_002935.2"/>
</dbReference>
<dbReference type="PDB" id="6JOO">
    <property type="method" value="X-ray"/>
    <property type="resolution" value="2.90 A"/>
    <property type="chains" value="A=1-497, A=664-1084"/>
</dbReference>
<dbReference type="PDBsum" id="6JOO"/>
<dbReference type="SMR" id="Q6NKI3"/>
<dbReference type="STRING" id="257309.DIP0036"/>
<dbReference type="KEGG" id="cdi:DIP0036"/>
<dbReference type="HOGENOM" id="CLU_280423_0_0_11"/>
<dbReference type="Proteomes" id="UP000002198">
    <property type="component" value="Chromosome"/>
</dbReference>
<dbReference type="GO" id="GO:0003677">
    <property type="term" value="F:DNA binding"/>
    <property type="evidence" value="ECO:0007669"/>
    <property type="project" value="UniProtKB-KW"/>
</dbReference>
<dbReference type="GO" id="GO:0004519">
    <property type="term" value="F:endonuclease activity"/>
    <property type="evidence" value="ECO:0007669"/>
    <property type="project" value="UniProtKB-KW"/>
</dbReference>
<dbReference type="GO" id="GO:0003723">
    <property type="term" value="F:RNA binding"/>
    <property type="evidence" value="ECO:0007669"/>
    <property type="project" value="UniProtKB-KW"/>
</dbReference>
<dbReference type="GO" id="GO:0008270">
    <property type="term" value="F:zinc ion binding"/>
    <property type="evidence" value="ECO:0007669"/>
    <property type="project" value="InterPro"/>
</dbReference>
<dbReference type="GO" id="GO:0051607">
    <property type="term" value="P:defense response to virus"/>
    <property type="evidence" value="ECO:0007669"/>
    <property type="project" value="UniProtKB-KW"/>
</dbReference>
<dbReference type="Gene3D" id="3.30.70.3520">
    <property type="match status" value="1"/>
</dbReference>
<dbReference type="Gene3D" id="3.30.420.10">
    <property type="entry name" value="Ribonuclease H-like superfamily/Ribonuclease H"/>
    <property type="match status" value="3"/>
</dbReference>
<dbReference type="InterPro" id="IPR028629">
    <property type="entry name" value="Cas9"/>
</dbReference>
<dbReference type="InterPro" id="IPR040619">
    <property type="entry name" value="Cas9_alpha-helical_lobe"/>
</dbReference>
<dbReference type="InterPro" id="IPR040796">
    <property type="entry name" value="Cas9_b_hairpin"/>
</dbReference>
<dbReference type="InterPro" id="IPR041217">
    <property type="entry name" value="Cas9_C"/>
</dbReference>
<dbReference type="InterPro" id="IPR041225">
    <property type="entry name" value="Cas9_Topo"/>
</dbReference>
<dbReference type="InterPro" id="IPR002711">
    <property type="entry name" value="HNH"/>
</dbReference>
<dbReference type="InterPro" id="IPR033114">
    <property type="entry name" value="HNH_CAS9"/>
</dbReference>
<dbReference type="InterPro" id="IPR003615">
    <property type="entry name" value="HNH_nuc"/>
</dbReference>
<dbReference type="InterPro" id="IPR052892">
    <property type="entry name" value="NA-targeting_endonuclease"/>
</dbReference>
<dbReference type="InterPro" id="IPR036397">
    <property type="entry name" value="RNaseH_sf"/>
</dbReference>
<dbReference type="InterPro" id="IPR041383">
    <property type="entry name" value="RuvC_III"/>
</dbReference>
<dbReference type="NCBIfam" id="TIGR01865">
    <property type="entry name" value="cas_Csn1"/>
    <property type="match status" value="1"/>
</dbReference>
<dbReference type="PANTHER" id="PTHR33877:SF2">
    <property type="entry name" value="OS07G0170200 PROTEIN"/>
    <property type="match status" value="1"/>
</dbReference>
<dbReference type="PANTHER" id="PTHR33877">
    <property type="entry name" value="SLL1193 PROTEIN"/>
    <property type="match status" value="1"/>
</dbReference>
<dbReference type="Pfam" id="PF18470">
    <property type="entry name" value="Cas9_a"/>
    <property type="match status" value="1"/>
</dbReference>
<dbReference type="Pfam" id="PF17893">
    <property type="entry name" value="Cas9_b_hairpin"/>
    <property type="match status" value="1"/>
</dbReference>
<dbReference type="Pfam" id="PF18525">
    <property type="entry name" value="Cas9_C"/>
    <property type="match status" value="1"/>
</dbReference>
<dbReference type="Pfam" id="PF17894">
    <property type="entry name" value="Cas9_Topo"/>
    <property type="match status" value="1"/>
</dbReference>
<dbReference type="Pfam" id="PF01844">
    <property type="entry name" value="HNH"/>
    <property type="match status" value="1"/>
</dbReference>
<dbReference type="Pfam" id="PF18541">
    <property type="entry name" value="RuvC_III"/>
    <property type="match status" value="1"/>
</dbReference>
<dbReference type="SMART" id="SM00507">
    <property type="entry name" value="HNHc"/>
    <property type="match status" value="1"/>
</dbReference>
<dbReference type="PROSITE" id="PS51749">
    <property type="entry name" value="HNH_CAS9"/>
    <property type="match status" value="1"/>
</dbReference>
<protein>
    <recommendedName>
        <fullName evidence="4">CRISPR-associated endonuclease Cas9</fullName>
        <ecNumber>3.1.-.-</ecNumber>
    </recommendedName>
    <alternativeName>
        <fullName evidence="4">SaCas9</fullName>
    </alternativeName>
</protein>
<name>CAS9_CORDI</name>
<comment type="function">
    <text evidence="1 3">CRISPR (clustered regularly interspaced short palindromic repeat) is an adaptive immune system that provides protection against mobile genetic elements (viruses, transposable elements and conjugative plasmids). CRISPR clusters contain spacers, sequences complementary to antecedent mobile elements, and target invading nucleic acids. CRISPR clusters are transcribed and processed into CRISPR RNA (crRNA). In type II CRISPR systems correct processing of pre-crRNA requires a trans-encoded small RNA (tracrRNA), endogenous ribonuclease 3 (rnc) and this protein. The tracrRNA serves as a guide for ribonuclease 3-aided processing of pre-crRNA. Subsequently Cas9/crRNA/tracrRNA endonucleolytically cleaves linear or circular dsDNA target complementary to the spacer; Cas9 is inactive in the absence of the 2 guide RNAs (gRNA) (PubMed:25830891). Cas9 recognizes the protospacer adjacent motif (PAM) in the CRISPR repeat sequences to help distinguish self versus nonself, as targets within the bacterial CRISPR locus do not have PAMs (PubMed:25830891). PAM recognition is also required for catalytic activity (By similarity).</text>
</comment>
<comment type="cofactor">
    <cofactor evidence="1">
        <name>Mg(2+)</name>
        <dbReference type="ChEBI" id="CHEBI:18420"/>
    </cofactor>
    <text evidence="1">Endonuclease activity on target dsDNA requires Mg(2+).</text>
</comment>
<comment type="subunit">
    <text evidence="6">Monomer. Binds crRNA and tracrRNA (Probable).</text>
</comment>
<comment type="domain">
    <text evidence="1">Has 2 endonuclease domains. The discontinuous RuvC-like domain cleaves the target DNA noncomplementary to crRNA while the HNH nuclease domain cleaves the target DNA complementary to crRNA.</text>
</comment>
<comment type="biotechnology">
    <text evidence="3">The simplicity of the Cas9-gRNAs RNA-directed DNA endonuclease activity may be used to target and modify a DNA sequence of interest; this enzyme has been tested in human cells but is not highly efficient.</text>
</comment>
<comment type="similarity">
    <text evidence="5">Belongs to the CRISPR-associated protein Cas9 family. Subtype II-C subfamily.</text>
</comment>
<organism>
    <name type="scientific">Corynebacterium diphtheriae (strain ATCC 700971 / NCTC 13129 / Biotype gravis)</name>
    <dbReference type="NCBI Taxonomy" id="257309"/>
    <lineage>
        <taxon>Bacteria</taxon>
        <taxon>Bacillati</taxon>
        <taxon>Actinomycetota</taxon>
        <taxon>Actinomycetes</taxon>
        <taxon>Mycobacteriales</taxon>
        <taxon>Corynebacteriaceae</taxon>
        <taxon>Corynebacterium</taxon>
    </lineage>
</organism>
<feature type="chain" id="PRO_0000436102" description="CRISPR-associated endonuclease Cas9">
    <location>
        <begin position="1"/>
        <end position="1084"/>
    </location>
</feature>
<feature type="domain" description="HNH Cas9-type" evidence="2">
    <location>
        <begin position="504"/>
        <end position="665"/>
    </location>
</feature>
<feature type="active site" description="For RuvC-like nuclease domain" evidence="1">
    <location>
        <position position="8"/>
    </location>
</feature>
<feature type="active site" description="Proton acceptor for HNH nuclease domain" evidence="1">
    <location>
        <position position="573"/>
    </location>
</feature>
<feature type="binding site" evidence="1">
    <location>
        <position position="8"/>
    </location>
    <ligand>
        <name>Mn(2+)</name>
        <dbReference type="ChEBI" id="CHEBI:29035"/>
        <label>1</label>
    </ligand>
</feature>
<feature type="binding site" evidence="1">
    <location>
        <position position="8"/>
    </location>
    <ligand>
        <name>Mn(2+)</name>
        <dbReference type="ChEBI" id="CHEBI:29035"/>
        <label>2</label>
    </ligand>
</feature>
<feature type="binding site" evidence="1">
    <location>
        <position position="496"/>
    </location>
    <ligand>
        <name>Mn(2+)</name>
        <dbReference type="ChEBI" id="CHEBI:29035"/>
        <label>1</label>
    </ligand>
</feature>
<feature type="binding site" evidence="1">
    <location>
        <position position="500"/>
    </location>
    <ligand>
        <name>Mn(2+)</name>
        <dbReference type="ChEBI" id="CHEBI:29035"/>
        <label>1</label>
    </ligand>
</feature>
<feature type="binding site" evidence="1">
    <location>
        <position position="500"/>
    </location>
    <ligand>
        <name>Mn(2+)</name>
        <dbReference type="ChEBI" id="CHEBI:29035"/>
        <label>2</label>
    </ligand>
</feature>
<feature type="binding site" evidence="1">
    <location>
        <position position="727"/>
    </location>
    <ligand>
        <name>Mn(2+)</name>
        <dbReference type="ChEBI" id="CHEBI:29035"/>
        <label>2</label>
    </ligand>
</feature>
<feature type="strand" evidence="7">
    <location>
        <begin position="3"/>
        <end position="9"/>
    </location>
</feature>
<feature type="strand" evidence="7">
    <location>
        <begin position="11"/>
        <end position="21"/>
    </location>
</feature>
<feature type="strand" evidence="7">
    <location>
        <begin position="23"/>
        <end position="25"/>
    </location>
</feature>
<feature type="strand" evidence="7">
    <location>
        <begin position="27"/>
        <end position="37"/>
    </location>
</feature>
<feature type="helix" evidence="7">
    <location>
        <begin position="53"/>
        <end position="83"/>
    </location>
</feature>
<feature type="turn" evidence="7">
    <location>
        <begin position="91"/>
        <end position="93"/>
    </location>
</feature>
<feature type="helix" evidence="7">
    <location>
        <begin position="99"/>
        <end position="107"/>
    </location>
</feature>
<feature type="helix" evidence="7">
    <location>
        <begin position="115"/>
        <end position="131"/>
    </location>
</feature>
<feature type="helix" evidence="7">
    <location>
        <begin position="142"/>
        <end position="145"/>
    </location>
</feature>
<feature type="helix" evidence="7">
    <location>
        <begin position="153"/>
        <end position="166"/>
    </location>
</feature>
<feature type="helix" evidence="7">
    <location>
        <begin position="176"/>
        <end position="181"/>
    </location>
</feature>
<feature type="turn" evidence="7">
    <location>
        <begin position="193"/>
        <end position="195"/>
    </location>
</feature>
<feature type="helix" evidence="7">
    <location>
        <begin position="197"/>
        <end position="199"/>
    </location>
</feature>
<feature type="helix" evidence="7">
    <location>
        <begin position="203"/>
        <end position="216"/>
    </location>
</feature>
<feature type="helix" evidence="7">
    <location>
        <begin position="221"/>
        <end position="231"/>
    </location>
</feature>
<feature type="helix" evidence="7">
    <location>
        <begin position="238"/>
        <end position="241"/>
    </location>
</feature>
<feature type="strand" evidence="7">
    <location>
        <begin position="249"/>
        <end position="251"/>
    </location>
</feature>
<feature type="strand" evidence="7">
    <location>
        <begin position="258"/>
        <end position="261"/>
    </location>
</feature>
<feature type="helix" evidence="7">
    <location>
        <begin position="262"/>
        <end position="274"/>
    </location>
</feature>
<feature type="helix" evidence="7">
    <location>
        <begin position="293"/>
        <end position="302"/>
    </location>
</feature>
<feature type="helix" evidence="7">
    <location>
        <begin position="345"/>
        <end position="352"/>
    </location>
</feature>
<feature type="helix" evidence="7">
    <location>
        <begin position="356"/>
        <end position="364"/>
    </location>
</feature>
<feature type="helix" evidence="7">
    <location>
        <begin position="367"/>
        <end position="377"/>
    </location>
</feature>
<feature type="strand" evidence="7">
    <location>
        <begin position="385"/>
        <end position="387"/>
    </location>
</feature>
<feature type="helix" evidence="7">
    <location>
        <begin position="388"/>
        <end position="399"/>
    </location>
</feature>
<feature type="helix" evidence="7">
    <location>
        <begin position="402"/>
        <end position="410"/>
    </location>
</feature>
<feature type="helix" evidence="7">
    <location>
        <begin position="422"/>
        <end position="433"/>
    </location>
</feature>
<feature type="helix" evidence="7">
    <location>
        <begin position="441"/>
        <end position="444"/>
    </location>
</feature>
<feature type="turn" evidence="7">
    <location>
        <begin position="445"/>
        <end position="448"/>
    </location>
</feature>
<feature type="helix" evidence="7">
    <location>
        <begin position="467"/>
        <end position="487"/>
    </location>
</feature>
<feature type="strand" evidence="7">
    <location>
        <begin position="491"/>
        <end position="496"/>
    </location>
</feature>
<feature type="helix" evidence="7">
    <location>
        <begin position="669"/>
        <end position="682"/>
    </location>
</feature>
<feature type="turn" evidence="7">
    <location>
        <begin position="683"/>
        <end position="687"/>
    </location>
</feature>
<feature type="strand" evidence="7">
    <location>
        <begin position="689"/>
        <end position="693"/>
    </location>
</feature>
<feature type="helix" evidence="7">
    <location>
        <begin position="695"/>
        <end position="699"/>
    </location>
</feature>
<feature type="strand" evidence="7">
    <location>
        <begin position="714"/>
        <end position="718"/>
    </location>
</feature>
<feature type="strand" evidence="7">
    <location>
        <begin position="721"/>
        <end position="723"/>
    </location>
</feature>
<feature type="helix" evidence="7">
    <location>
        <begin position="726"/>
        <end position="734"/>
    </location>
</feature>
<feature type="helix" evidence="7">
    <location>
        <begin position="739"/>
        <end position="748"/>
    </location>
</feature>
<feature type="helix" evidence="7">
    <location>
        <begin position="772"/>
        <end position="797"/>
    </location>
</feature>
<feature type="strand" evidence="7">
    <location>
        <begin position="802"/>
        <end position="804"/>
    </location>
</feature>
<feature type="strand" evidence="7">
    <location>
        <begin position="825"/>
        <end position="828"/>
    </location>
</feature>
<feature type="helix" evidence="7">
    <location>
        <begin position="835"/>
        <end position="838"/>
    </location>
</feature>
<feature type="strand" evidence="7">
    <location>
        <begin position="841"/>
        <end position="843"/>
    </location>
</feature>
<feature type="helix" evidence="7">
    <location>
        <begin position="844"/>
        <end position="851"/>
    </location>
</feature>
<feature type="turn" evidence="7">
    <location>
        <begin position="858"/>
        <end position="860"/>
    </location>
</feature>
<feature type="strand" evidence="7">
    <location>
        <begin position="870"/>
        <end position="872"/>
    </location>
</feature>
<feature type="strand" evidence="7">
    <location>
        <begin position="875"/>
        <end position="877"/>
    </location>
</feature>
<feature type="strand" evidence="7">
    <location>
        <begin position="881"/>
        <end position="885"/>
    </location>
</feature>
<feature type="strand" evidence="7">
    <location>
        <begin position="887"/>
        <end position="890"/>
    </location>
</feature>
<feature type="strand" evidence="7">
    <location>
        <begin position="892"/>
        <end position="895"/>
    </location>
</feature>
<feature type="strand" evidence="7">
    <location>
        <begin position="898"/>
        <end position="901"/>
    </location>
</feature>
<feature type="strand" evidence="7">
    <location>
        <begin position="906"/>
        <end position="914"/>
    </location>
</feature>
<feature type="strand" evidence="7">
    <location>
        <begin position="921"/>
        <end position="929"/>
    </location>
</feature>
<feature type="helix" evidence="7">
    <location>
        <begin position="930"/>
        <end position="932"/>
    </location>
</feature>
<feature type="turn" evidence="7">
    <location>
        <begin position="934"/>
        <end position="937"/>
    </location>
</feature>
<feature type="helix" evidence="7">
    <location>
        <begin position="940"/>
        <end position="942"/>
    </location>
</feature>
<feature type="helix" evidence="7">
    <location>
        <begin position="950"/>
        <end position="953"/>
    </location>
</feature>
<feature type="helix" evidence="7">
    <location>
        <begin position="957"/>
        <end position="965"/>
    </location>
</feature>
<feature type="strand" evidence="7">
    <location>
        <begin position="968"/>
        <end position="974"/>
    </location>
</feature>
<feature type="strand" evidence="7">
    <location>
        <begin position="979"/>
        <end position="981"/>
    </location>
</feature>
<feature type="turn" evidence="7">
    <location>
        <begin position="984"/>
        <end position="987"/>
    </location>
</feature>
<feature type="helix" evidence="7">
    <location>
        <begin position="990"/>
        <end position="999"/>
    </location>
</feature>
<feature type="strand" evidence="7">
    <location>
        <begin position="1004"/>
        <end position="1012"/>
    </location>
</feature>
<feature type="strand" evidence="7">
    <location>
        <begin position="1015"/>
        <end position="1020"/>
    </location>
</feature>
<feature type="helix" evidence="7">
    <location>
        <begin position="1025"/>
        <end position="1027"/>
    </location>
</feature>
<feature type="helix" evidence="7">
    <location>
        <begin position="1034"/>
        <end position="1040"/>
    </location>
</feature>
<feature type="helix" evidence="7">
    <location>
        <begin position="1049"/>
        <end position="1055"/>
    </location>
</feature>
<feature type="strand" evidence="7">
    <location>
        <begin position="1059"/>
        <end position="1061"/>
    </location>
</feature>
<sequence length="1084" mass="121522">MKYHVGIDVGTFSVGLAAIEVDDAGMPIKTLSLVSHIHDSGLDPDEIKSAVTRLASSGIARRTRRLYRRKRRRLQQLDKFIQRQGWPVIELEDYSDPLYPWKVRAELAASYIADEKERGEKLSVALRHIARHRGWRNPYAKVSSLYLPDGPSDAFKAIREEIKRASGQPVPETATVGQMVTLCELGTLKLRGEGGVLSARLQQSDYAREIQEICRMQEIGQELYRKIIDVVFAAESPKGSASSRVGKDPLQPGKNRALKASDAFQRYRIAALIGNLRVRVDGEKRILSVEEKNLVFDHLVNLTPKKEPEWVTIAEILGIDRGQLIGTATMTDDGERAGARPPTHDTNRSIVNSRIAPLVDWWKTASALEQHAMVKALSNAEVDDFDSPEGAKVQAFFADLDDDVHAKLDSLHLPVGRAAYSEDTLVRLTRRMLSDGVDLYTARLQEFGIEPSWTPPTPRIGEPVGNPAVDRVLKTVSRWLESATKTWGAPERVIIEHVREGFVTEKRAREMDGDMRRRAARNAKLFQEMQEKLNVQGKPSRADLWRYQSVQRQNCQCAYCGSPITFSNSEMDHIVPRAGQGSTNTRENLVAVCHRCNQSKGNTPFAIWAKNTSIEGVSVKEAVERTRHWVTDTGMRSTDFKKFTKAVVERFQRATMDEEIDARSMESVAWMANELRSRVAQHFASHGTTVRVYRGSLTAEARRASGISGKLKFFDGVGKSRLDRRHHAIDAAVIAFTSDYVAETLAVRSNLKQSQAHRQEAPQWREFTGKDAEHRAAWRVWCQKMEKLSALLTEDLRDDRVVVMSNVRLRLGNGSAHKETIGKLSKVKLSSQLSVSDIDKASSEALWCALTREPGFDPKEGLPANPERHIRVNGTHVYAGDNIGLFPVSAGSIALRGGYAELGSSFHHARVYKITSGKKPAFAMLRVYTIDLLPYRNQDLFSVELKPQTMSMRQAEKKLRDALATGNAEYLGWLVVDDELVVDTSKIATDQVKAVEAELGTIRRWRVDGFFSPSKLRLRPLQMSKEGIKKESAPELSKIIDRPGWLPAVNKLFSDGNVTVVRRDSLGRVRLESTAHLPVTWKVQ</sequence>
<accession>Q6NKI3</accession>
<keyword id="KW-0002">3D-structure</keyword>
<keyword id="KW-0051">Antiviral defense</keyword>
<keyword id="KW-0238">DNA-binding</keyword>
<keyword id="KW-0255">Endonuclease</keyword>
<keyword id="KW-0378">Hydrolase</keyword>
<keyword id="KW-0460">Magnesium</keyword>
<keyword id="KW-0464">Manganese</keyword>
<keyword id="KW-0479">Metal-binding</keyword>
<keyword id="KW-0540">Nuclease</keyword>
<keyword id="KW-1185">Reference proteome</keyword>
<keyword id="KW-0694">RNA-binding</keyword>